<protein>
    <recommendedName>
        <fullName evidence="1">Bifunctional protein FolD</fullName>
    </recommendedName>
    <domain>
        <recommendedName>
            <fullName evidence="1">Methylenetetrahydrofolate dehydrogenase</fullName>
            <ecNumber evidence="1">1.5.1.5</ecNumber>
        </recommendedName>
    </domain>
    <domain>
        <recommendedName>
            <fullName evidence="1">Methenyltetrahydrofolate cyclohydrolase</fullName>
            <ecNumber evidence="1">3.5.4.9</ecNumber>
        </recommendedName>
    </domain>
</protein>
<sequence length="301" mass="32885">MTVIMDGKKLAELRLIETKNDLLALKDKYQITVKLVIILVGNNDASLIYVNNKVAKAKAIGMDSEIIRLFEFIEEKKLFSVIDDLNCDSTVHGIIVQLPLPPHIDALKLFARIDSRKDVDGLNPINIGYLNIGANQGLIPCTALGCIDLLQYYVTGLKGKHVVVIGKSNIVGKPLSALLLRNSCTVTICHSATVDLALHTRTADIVISAVGKANFLTDKHFSGNLAFIDVGISHIYDLQTHKRKLVGDGDFLKIKDLVKFITPVPGGVGPMTVAYLLKNTLTAAKLIYASIIDNDNEKRLC</sequence>
<organism>
    <name type="scientific">Orientia tsutsugamushi (strain Boryong)</name>
    <name type="common">Rickettsia tsutsugamushi</name>
    <dbReference type="NCBI Taxonomy" id="357244"/>
    <lineage>
        <taxon>Bacteria</taxon>
        <taxon>Pseudomonadati</taxon>
        <taxon>Pseudomonadota</taxon>
        <taxon>Alphaproteobacteria</taxon>
        <taxon>Rickettsiales</taxon>
        <taxon>Rickettsiaceae</taxon>
        <taxon>Rickettsieae</taxon>
        <taxon>Orientia</taxon>
    </lineage>
</organism>
<feature type="chain" id="PRO_0000305856" description="Bifunctional protein FolD">
    <location>
        <begin position="1"/>
        <end position="301"/>
    </location>
</feature>
<feature type="binding site" evidence="1">
    <location>
        <begin position="166"/>
        <end position="168"/>
    </location>
    <ligand>
        <name>NADP(+)</name>
        <dbReference type="ChEBI" id="CHEBI:58349"/>
    </ligand>
</feature>
<feature type="binding site" evidence="1">
    <location>
        <position position="191"/>
    </location>
    <ligand>
        <name>NADP(+)</name>
        <dbReference type="ChEBI" id="CHEBI:58349"/>
    </ligand>
</feature>
<feature type="binding site" evidence="1">
    <location>
        <position position="232"/>
    </location>
    <ligand>
        <name>NADP(+)</name>
        <dbReference type="ChEBI" id="CHEBI:58349"/>
    </ligand>
</feature>
<evidence type="ECO:0000255" key="1">
    <source>
        <dbReference type="HAMAP-Rule" id="MF_01576"/>
    </source>
</evidence>
<accession>A5CF58</accession>
<comment type="function">
    <text evidence="1">Catalyzes the oxidation of 5,10-methylenetetrahydrofolate to 5,10-methenyltetrahydrofolate and then the hydrolysis of 5,10-methenyltetrahydrofolate to 10-formyltetrahydrofolate.</text>
</comment>
<comment type="catalytic activity">
    <reaction evidence="1">
        <text>(6R)-5,10-methylene-5,6,7,8-tetrahydrofolate + NADP(+) = (6R)-5,10-methenyltetrahydrofolate + NADPH</text>
        <dbReference type="Rhea" id="RHEA:22812"/>
        <dbReference type="ChEBI" id="CHEBI:15636"/>
        <dbReference type="ChEBI" id="CHEBI:57455"/>
        <dbReference type="ChEBI" id="CHEBI:57783"/>
        <dbReference type="ChEBI" id="CHEBI:58349"/>
        <dbReference type="EC" id="1.5.1.5"/>
    </reaction>
</comment>
<comment type="catalytic activity">
    <reaction evidence="1">
        <text>(6R)-5,10-methenyltetrahydrofolate + H2O = (6R)-10-formyltetrahydrofolate + H(+)</text>
        <dbReference type="Rhea" id="RHEA:23700"/>
        <dbReference type="ChEBI" id="CHEBI:15377"/>
        <dbReference type="ChEBI" id="CHEBI:15378"/>
        <dbReference type="ChEBI" id="CHEBI:57455"/>
        <dbReference type="ChEBI" id="CHEBI:195366"/>
        <dbReference type="EC" id="3.5.4.9"/>
    </reaction>
</comment>
<comment type="pathway">
    <text evidence="1">One-carbon metabolism; tetrahydrofolate interconversion.</text>
</comment>
<comment type="subunit">
    <text evidence="1">Homodimer.</text>
</comment>
<comment type="similarity">
    <text evidence="1">Belongs to the tetrahydrofolate dehydrogenase/cyclohydrolase family.</text>
</comment>
<gene>
    <name evidence="1" type="primary">folD</name>
    <name type="ordered locus">OTBS_1842</name>
</gene>
<keyword id="KW-0028">Amino-acid biosynthesis</keyword>
<keyword id="KW-0368">Histidine biosynthesis</keyword>
<keyword id="KW-0378">Hydrolase</keyword>
<keyword id="KW-0486">Methionine biosynthesis</keyword>
<keyword id="KW-0511">Multifunctional enzyme</keyword>
<keyword id="KW-0521">NADP</keyword>
<keyword id="KW-0554">One-carbon metabolism</keyword>
<keyword id="KW-0560">Oxidoreductase</keyword>
<keyword id="KW-0658">Purine biosynthesis</keyword>
<keyword id="KW-1185">Reference proteome</keyword>
<reference key="1">
    <citation type="journal article" date="2007" name="Proc. Natl. Acad. Sci. U.S.A.">
        <title>The Orientia tsutsugamushi genome reveals massive proliferation of conjugative type IV secretion system and host-cell interaction genes.</title>
        <authorList>
            <person name="Cho N.-H."/>
            <person name="Kim H.-R."/>
            <person name="Lee J.-H."/>
            <person name="Kim S.-Y."/>
            <person name="Kim J."/>
            <person name="Cha S."/>
            <person name="Kim S.-Y."/>
            <person name="Darby A.C."/>
            <person name="Fuxelius H.-H."/>
            <person name="Yin J."/>
            <person name="Kim J.H."/>
            <person name="Kim J."/>
            <person name="Lee S.J."/>
            <person name="Koh Y.-S."/>
            <person name="Jang W.-J."/>
            <person name="Park K.-H."/>
            <person name="Andersson S.G.E."/>
            <person name="Choi M.-S."/>
            <person name="Kim I.-S."/>
        </authorList>
    </citation>
    <scope>NUCLEOTIDE SEQUENCE [LARGE SCALE GENOMIC DNA]</scope>
    <source>
        <strain>Boryong</strain>
    </source>
</reference>
<dbReference type="EC" id="1.5.1.5" evidence="1"/>
<dbReference type="EC" id="3.5.4.9" evidence="1"/>
<dbReference type="EMBL" id="AM494475">
    <property type="protein sequence ID" value="CAM80937.1"/>
    <property type="molecule type" value="Genomic_DNA"/>
</dbReference>
<dbReference type="RefSeq" id="WP_011945074.1">
    <property type="nucleotide sequence ID" value="NC_009488.1"/>
</dbReference>
<dbReference type="SMR" id="A5CF58"/>
<dbReference type="KEGG" id="ots:OTBS_1842"/>
<dbReference type="eggNOG" id="COG0190">
    <property type="taxonomic scope" value="Bacteria"/>
</dbReference>
<dbReference type="HOGENOM" id="CLU_034045_2_0_5"/>
<dbReference type="UniPathway" id="UPA00193"/>
<dbReference type="Proteomes" id="UP000001565">
    <property type="component" value="Chromosome"/>
</dbReference>
<dbReference type="GO" id="GO:0005829">
    <property type="term" value="C:cytosol"/>
    <property type="evidence" value="ECO:0007669"/>
    <property type="project" value="TreeGrafter"/>
</dbReference>
<dbReference type="GO" id="GO:0004477">
    <property type="term" value="F:methenyltetrahydrofolate cyclohydrolase activity"/>
    <property type="evidence" value="ECO:0007669"/>
    <property type="project" value="UniProtKB-UniRule"/>
</dbReference>
<dbReference type="GO" id="GO:0004488">
    <property type="term" value="F:methylenetetrahydrofolate dehydrogenase (NADP+) activity"/>
    <property type="evidence" value="ECO:0007669"/>
    <property type="project" value="UniProtKB-UniRule"/>
</dbReference>
<dbReference type="GO" id="GO:0000105">
    <property type="term" value="P:L-histidine biosynthetic process"/>
    <property type="evidence" value="ECO:0007669"/>
    <property type="project" value="UniProtKB-KW"/>
</dbReference>
<dbReference type="GO" id="GO:0009086">
    <property type="term" value="P:methionine biosynthetic process"/>
    <property type="evidence" value="ECO:0007669"/>
    <property type="project" value="UniProtKB-KW"/>
</dbReference>
<dbReference type="GO" id="GO:0006164">
    <property type="term" value="P:purine nucleotide biosynthetic process"/>
    <property type="evidence" value="ECO:0007669"/>
    <property type="project" value="UniProtKB-KW"/>
</dbReference>
<dbReference type="GO" id="GO:0035999">
    <property type="term" value="P:tetrahydrofolate interconversion"/>
    <property type="evidence" value="ECO:0007669"/>
    <property type="project" value="UniProtKB-UniRule"/>
</dbReference>
<dbReference type="CDD" id="cd01080">
    <property type="entry name" value="NAD_bind_m-THF_DH_Cyclohyd"/>
    <property type="match status" value="1"/>
</dbReference>
<dbReference type="FunFam" id="3.40.50.10860:FF:000005">
    <property type="entry name" value="C-1-tetrahydrofolate synthase, cytoplasmic, putative"/>
    <property type="match status" value="1"/>
</dbReference>
<dbReference type="Gene3D" id="3.40.50.10860">
    <property type="entry name" value="Leucine Dehydrogenase, chain A, domain 1"/>
    <property type="match status" value="1"/>
</dbReference>
<dbReference type="Gene3D" id="3.40.50.720">
    <property type="entry name" value="NAD(P)-binding Rossmann-like Domain"/>
    <property type="match status" value="1"/>
</dbReference>
<dbReference type="HAMAP" id="MF_01576">
    <property type="entry name" value="THF_DHG_CYH"/>
    <property type="match status" value="1"/>
</dbReference>
<dbReference type="InterPro" id="IPR046346">
    <property type="entry name" value="Aminoacid_DH-like_N_sf"/>
</dbReference>
<dbReference type="InterPro" id="IPR036291">
    <property type="entry name" value="NAD(P)-bd_dom_sf"/>
</dbReference>
<dbReference type="InterPro" id="IPR000672">
    <property type="entry name" value="THF_DH/CycHdrlase"/>
</dbReference>
<dbReference type="InterPro" id="IPR020630">
    <property type="entry name" value="THF_DH/CycHdrlase_cat_dom"/>
</dbReference>
<dbReference type="InterPro" id="IPR020867">
    <property type="entry name" value="THF_DH/CycHdrlase_CS"/>
</dbReference>
<dbReference type="InterPro" id="IPR020631">
    <property type="entry name" value="THF_DH/CycHdrlase_NAD-bd_dom"/>
</dbReference>
<dbReference type="PANTHER" id="PTHR48099:SF5">
    <property type="entry name" value="C-1-TETRAHYDROFOLATE SYNTHASE, CYTOPLASMIC"/>
    <property type="match status" value="1"/>
</dbReference>
<dbReference type="PANTHER" id="PTHR48099">
    <property type="entry name" value="C-1-TETRAHYDROFOLATE SYNTHASE, CYTOPLASMIC-RELATED"/>
    <property type="match status" value="1"/>
</dbReference>
<dbReference type="Pfam" id="PF00763">
    <property type="entry name" value="THF_DHG_CYH"/>
    <property type="match status" value="1"/>
</dbReference>
<dbReference type="Pfam" id="PF02882">
    <property type="entry name" value="THF_DHG_CYH_C"/>
    <property type="match status" value="1"/>
</dbReference>
<dbReference type="PRINTS" id="PR00085">
    <property type="entry name" value="THFDHDRGNASE"/>
</dbReference>
<dbReference type="SUPFAM" id="SSF53223">
    <property type="entry name" value="Aminoacid dehydrogenase-like, N-terminal domain"/>
    <property type="match status" value="1"/>
</dbReference>
<dbReference type="SUPFAM" id="SSF51735">
    <property type="entry name" value="NAD(P)-binding Rossmann-fold domains"/>
    <property type="match status" value="1"/>
</dbReference>
<dbReference type="PROSITE" id="PS00767">
    <property type="entry name" value="THF_DHG_CYH_2"/>
    <property type="match status" value="1"/>
</dbReference>
<name>FOLD_ORITB</name>
<proteinExistence type="inferred from homology"/>